<sequence>MTNPLYHKHIISINDLSRDELELVLRTAASLKKTPQPELLKHKVIASCFFEASTRTRLSFETSIHRLGASVVGFSDSSNTSLGKKGETLADTMSVISTYVDAIVMRHPQEGASRLAAQFSGNVPIVNAGDGANQHPTQTLLDLFTIQETQGRLDNINIAMVGDLKYGRTVHSLTQALAKFNGNHFFFIAPDALAMPAYILQMLEEKEIEYSLHESLEEVVPELDILYMTRVQKERLDPSEYANVKAQFILRSSDLTGARDNLKVLHPLPRIDEITTDVDKTPYAYYFQQAGNGIFARQALLALVLNAELAL</sequence>
<reference key="1">
    <citation type="journal article" date="2004" name="Proc. Natl. Acad. Sci. U.S.A.">
        <title>Insights into the evolution of Yersinia pestis through whole-genome comparison with Yersinia pseudotuberculosis.</title>
        <authorList>
            <person name="Chain P.S.G."/>
            <person name="Carniel E."/>
            <person name="Larimer F.W."/>
            <person name="Lamerdin J."/>
            <person name="Stoutland P.O."/>
            <person name="Regala W.M."/>
            <person name="Georgescu A.M."/>
            <person name="Vergez L.M."/>
            <person name="Land M.L."/>
            <person name="Motin V.L."/>
            <person name="Brubaker R.R."/>
            <person name="Fowler J."/>
            <person name="Hinnebusch J."/>
            <person name="Marceau M."/>
            <person name="Medigue C."/>
            <person name="Simonet M."/>
            <person name="Chenal-Francisque V."/>
            <person name="Souza B."/>
            <person name="Dacheux D."/>
            <person name="Elliott J.M."/>
            <person name="Derbise A."/>
            <person name="Hauser L.J."/>
            <person name="Garcia E."/>
        </authorList>
    </citation>
    <scope>NUCLEOTIDE SEQUENCE [LARGE SCALE GENOMIC DNA]</scope>
    <source>
        <strain>IP32953</strain>
    </source>
</reference>
<proteinExistence type="inferred from homology"/>
<name>PYRB_YERPS</name>
<keyword id="KW-0665">Pyrimidine biosynthesis</keyword>
<keyword id="KW-0808">Transferase</keyword>
<comment type="function">
    <text evidence="1">Catalyzes the condensation of carbamoyl phosphate and aspartate to form carbamoyl aspartate and inorganic phosphate, the committed step in the de novo pyrimidine nucleotide biosynthesis pathway.</text>
</comment>
<comment type="catalytic activity">
    <reaction evidence="1">
        <text>carbamoyl phosphate + L-aspartate = N-carbamoyl-L-aspartate + phosphate + H(+)</text>
        <dbReference type="Rhea" id="RHEA:20013"/>
        <dbReference type="ChEBI" id="CHEBI:15378"/>
        <dbReference type="ChEBI" id="CHEBI:29991"/>
        <dbReference type="ChEBI" id="CHEBI:32814"/>
        <dbReference type="ChEBI" id="CHEBI:43474"/>
        <dbReference type="ChEBI" id="CHEBI:58228"/>
        <dbReference type="EC" id="2.1.3.2"/>
    </reaction>
</comment>
<comment type="pathway">
    <text evidence="1">Pyrimidine metabolism; UMP biosynthesis via de novo pathway; (S)-dihydroorotate from bicarbonate: step 2/3.</text>
</comment>
<comment type="subunit">
    <text evidence="1">Heterododecamer (2C3:3R2) of six catalytic PyrB chains organized as two trimers (C3), and six regulatory PyrI chains organized as three dimers (R2).</text>
</comment>
<comment type="similarity">
    <text evidence="1">Belongs to the aspartate/ornithine carbamoyltransferase superfamily. ATCase family.</text>
</comment>
<dbReference type="EC" id="2.1.3.2" evidence="1"/>
<dbReference type="EMBL" id="BX936398">
    <property type="protein sequence ID" value="CAH22769.1"/>
    <property type="molecule type" value="Genomic_DNA"/>
</dbReference>
<dbReference type="RefSeq" id="WP_011193148.1">
    <property type="nucleotide sequence ID" value="NC_006155.1"/>
</dbReference>
<dbReference type="SMR" id="Q665I6"/>
<dbReference type="KEGG" id="ypo:BZ17_3070"/>
<dbReference type="KEGG" id="yps:YPTB3531"/>
<dbReference type="PATRIC" id="fig|273123.14.peg.3216"/>
<dbReference type="UniPathway" id="UPA00070">
    <property type="reaction ID" value="UER00116"/>
</dbReference>
<dbReference type="Proteomes" id="UP000001011">
    <property type="component" value="Chromosome"/>
</dbReference>
<dbReference type="GO" id="GO:0005829">
    <property type="term" value="C:cytosol"/>
    <property type="evidence" value="ECO:0007669"/>
    <property type="project" value="TreeGrafter"/>
</dbReference>
<dbReference type="GO" id="GO:0016597">
    <property type="term" value="F:amino acid binding"/>
    <property type="evidence" value="ECO:0007669"/>
    <property type="project" value="InterPro"/>
</dbReference>
<dbReference type="GO" id="GO:0004070">
    <property type="term" value="F:aspartate carbamoyltransferase activity"/>
    <property type="evidence" value="ECO:0007669"/>
    <property type="project" value="UniProtKB-UniRule"/>
</dbReference>
<dbReference type="GO" id="GO:0006207">
    <property type="term" value="P:'de novo' pyrimidine nucleobase biosynthetic process"/>
    <property type="evidence" value="ECO:0007669"/>
    <property type="project" value="InterPro"/>
</dbReference>
<dbReference type="GO" id="GO:0044205">
    <property type="term" value="P:'de novo' UMP biosynthetic process"/>
    <property type="evidence" value="ECO:0007669"/>
    <property type="project" value="UniProtKB-UniRule"/>
</dbReference>
<dbReference type="GO" id="GO:0006520">
    <property type="term" value="P:amino acid metabolic process"/>
    <property type="evidence" value="ECO:0007669"/>
    <property type="project" value="InterPro"/>
</dbReference>
<dbReference type="FunFam" id="3.40.50.1370:FF:000001">
    <property type="entry name" value="Aspartate carbamoyltransferase"/>
    <property type="match status" value="1"/>
</dbReference>
<dbReference type="FunFam" id="3.40.50.1370:FF:000002">
    <property type="entry name" value="Aspartate carbamoyltransferase 2"/>
    <property type="match status" value="1"/>
</dbReference>
<dbReference type="Gene3D" id="3.40.50.1370">
    <property type="entry name" value="Aspartate/ornithine carbamoyltransferase"/>
    <property type="match status" value="2"/>
</dbReference>
<dbReference type="HAMAP" id="MF_00001">
    <property type="entry name" value="Asp_carb_tr"/>
    <property type="match status" value="1"/>
</dbReference>
<dbReference type="InterPro" id="IPR006132">
    <property type="entry name" value="Asp/Orn_carbamoyltranf_P-bd"/>
</dbReference>
<dbReference type="InterPro" id="IPR006130">
    <property type="entry name" value="Asp/Orn_carbamoylTrfase"/>
</dbReference>
<dbReference type="InterPro" id="IPR036901">
    <property type="entry name" value="Asp/Orn_carbamoylTrfase_sf"/>
</dbReference>
<dbReference type="InterPro" id="IPR002082">
    <property type="entry name" value="Asp_carbamoyltransf"/>
</dbReference>
<dbReference type="InterPro" id="IPR006131">
    <property type="entry name" value="Asp_carbamoyltransf_Asp/Orn-bd"/>
</dbReference>
<dbReference type="NCBIfam" id="TIGR00670">
    <property type="entry name" value="asp_carb_tr"/>
    <property type="match status" value="1"/>
</dbReference>
<dbReference type="NCBIfam" id="NF002032">
    <property type="entry name" value="PRK00856.1"/>
    <property type="match status" value="1"/>
</dbReference>
<dbReference type="PANTHER" id="PTHR45753:SF6">
    <property type="entry name" value="ASPARTATE CARBAMOYLTRANSFERASE"/>
    <property type="match status" value="1"/>
</dbReference>
<dbReference type="PANTHER" id="PTHR45753">
    <property type="entry name" value="ORNITHINE CARBAMOYLTRANSFERASE, MITOCHONDRIAL"/>
    <property type="match status" value="1"/>
</dbReference>
<dbReference type="Pfam" id="PF00185">
    <property type="entry name" value="OTCace"/>
    <property type="match status" value="1"/>
</dbReference>
<dbReference type="Pfam" id="PF02729">
    <property type="entry name" value="OTCace_N"/>
    <property type="match status" value="1"/>
</dbReference>
<dbReference type="PRINTS" id="PR00100">
    <property type="entry name" value="AOTCASE"/>
</dbReference>
<dbReference type="PRINTS" id="PR00101">
    <property type="entry name" value="ATCASE"/>
</dbReference>
<dbReference type="SUPFAM" id="SSF53671">
    <property type="entry name" value="Aspartate/ornithine carbamoyltransferase"/>
    <property type="match status" value="1"/>
</dbReference>
<dbReference type="PROSITE" id="PS00097">
    <property type="entry name" value="CARBAMOYLTRANSFERASE"/>
    <property type="match status" value="1"/>
</dbReference>
<feature type="chain" id="PRO_0000113238" description="Aspartate carbamoyltransferase catalytic subunit">
    <location>
        <begin position="1"/>
        <end position="311"/>
    </location>
</feature>
<feature type="binding site" evidence="1">
    <location>
        <position position="55"/>
    </location>
    <ligand>
        <name>carbamoyl phosphate</name>
        <dbReference type="ChEBI" id="CHEBI:58228"/>
    </ligand>
</feature>
<feature type="binding site" evidence="1">
    <location>
        <position position="56"/>
    </location>
    <ligand>
        <name>carbamoyl phosphate</name>
        <dbReference type="ChEBI" id="CHEBI:58228"/>
    </ligand>
</feature>
<feature type="binding site" evidence="1">
    <location>
        <position position="85"/>
    </location>
    <ligand>
        <name>L-aspartate</name>
        <dbReference type="ChEBI" id="CHEBI:29991"/>
    </ligand>
</feature>
<feature type="binding site" evidence="1">
    <location>
        <position position="106"/>
    </location>
    <ligand>
        <name>carbamoyl phosphate</name>
        <dbReference type="ChEBI" id="CHEBI:58228"/>
    </ligand>
</feature>
<feature type="binding site" evidence="1">
    <location>
        <position position="135"/>
    </location>
    <ligand>
        <name>carbamoyl phosphate</name>
        <dbReference type="ChEBI" id="CHEBI:58228"/>
    </ligand>
</feature>
<feature type="binding site" evidence="1">
    <location>
        <position position="138"/>
    </location>
    <ligand>
        <name>carbamoyl phosphate</name>
        <dbReference type="ChEBI" id="CHEBI:58228"/>
    </ligand>
</feature>
<feature type="binding site" evidence="1">
    <location>
        <position position="168"/>
    </location>
    <ligand>
        <name>L-aspartate</name>
        <dbReference type="ChEBI" id="CHEBI:29991"/>
    </ligand>
</feature>
<feature type="binding site" evidence="1">
    <location>
        <position position="230"/>
    </location>
    <ligand>
        <name>L-aspartate</name>
        <dbReference type="ChEBI" id="CHEBI:29991"/>
    </ligand>
</feature>
<feature type="binding site" evidence="1">
    <location>
        <position position="268"/>
    </location>
    <ligand>
        <name>carbamoyl phosphate</name>
        <dbReference type="ChEBI" id="CHEBI:58228"/>
    </ligand>
</feature>
<feature type="binding site" evidence="1">
    <location>
        <position position="269"/>
    </location>
    <ligand>
        <name>carbamoyl phosphate</name>
        <dbReference type="ChEBI" id="CHEBI:58228"/>
    </ligand>
</feature>
<organism>
    <name type="scientific">Yersinia pseudotuberculosis serotype I (strain IP32953)</name>
    <dbReference type="NCBI Taxonomy" id="273123"/>
    <lineage>
        <taxon>Bacteria</taxon>
        <taxon>Pseudomonadati</taxon>
        <taxon>Pseudomonadota</taxon>
        <taxon>Gammaproteobacteria</taxon>
        <taxon>Enterobacterales</taxon>
        <taxon>Yersiniaceae</taxon>
        <taxon>Yersinia</taxon>
    </lineage>
</organism>
<gene>
    <name evidence="1" type="primary">pyrB</name>
    <name type="ordered locus">YPTB3531</name>
</gene>
<evidence type="ECO:0000255" key="1">
    <source>
        <dbReference type="HAMAP-Rule" id="MF_00001"/>
    </source>
</evidence>
<accession>Q665I6</accession>
<protein>
    <recommendedName>
        <fullName evidence="1">Aspartate carbamoyltransferase catalytic subunit</fullName>
        <ecNumber evidence="1">2.1.3.2</ecNumber>
    </recommendedName>
    <alternativeName>
        <fullName evidence="1">Aspartate transcarbamylase</fullName>
        <shortName evidence="1">ATCase</shortName>
    </alternativeName>
</protein>